<evidence type="ECO:0000250" key="1">
    <source>
        <dbReference type="UniProtKB" id="Q8RWN5"/>
    </source>
</evidence>
<evidence type="ECO:0000255" key="2">
    <source>
        <dbReference type="PROSITE-ProRule" id="PRU00047"/>
    </source>
</evidence>
<evidence type="ECO:0000255" key="3">
    <source>
        <dbReference type="PROSITE-ProRule" id="PRU00176"/>
    </source>
</evidence>
<evidence type="ECO:0000256" key="4">
    <source>
        <dbReference type="SAM" id="MobiDB-lite"/>
    </source>
</evidence>
<evidence type="ECO:0000269" key="5">
    <source>
    </source>
</evidence>
<evidence type="ECO:0000303" key="6">
    <source>
    </source>
</evidence>
<evidence type="ECO:0000305" key="7"/>
<evidence type="ECO:0000312" key="8">
    <source>
        <dbReference type="Araport" id="AT1G60650"/>
    </source>
</evidence>
<evidence type="ECO:0000312" key="9">
    <source>
        <dbReference type="EMBL" id="AAB71977.1"/>
    </source>
</evidence>
<keyword id="KW-0238">DNA-binding</keyword>
<keyword id="KW-0479">Metal-binding</keyword>
<keyword id="KW-0539">Nucleus</keyword>
<keyword id="KW-0597">Phosphoprotein</keyword>
<keyword id="KW-1185">Reference proteome</keyword>
<keyword id="KW-0694">RNA-binding</keyword>
<keyword id="KW-0346">Stress response</keyword>
<keyword id="KW-0862">Zinc</keyword>
<keyword id="KW-0863">Zinc-finger</keyword>
<name>RZ1B_ARATH</name>
<reference key="1">
    <citation type="journal article" date="2000" name="Nature">
        <title>Sequence and analysis of chromosome 1 of the plant Arabidopsis thaliana.</title>
        <authorList>
            <person name="Theologis A."/>
            <person name="Ecker J.R."/>
            <person name="Palm C.J."/>
            <person name="Federspiel N.A."/>
            <person name="Kaul S."/>
            <person name="White O."/>
            <person name="Alonso J."/>
            <person name="Altafi H."/>
            <person name="Araujo R."/>
            <person name="Bowman C.L."/>
            <person name="Brooks S.Y."/>
            <person name="Buehler E."/>
            <person name="Chan A."/>
            <person name="Chao Q."/>
            <person name="Chen H."/>
            <person name="Cheuk R.F."/>
            <person name="Chin C.W."/>
            <person name="Chung M.K."/>
            <person name="Conn L."/>
            <person name="Conway A.B."/>
            <person name="Conway A.R."/>
            <person name="Creasy T.H."/>
            <person name="Dewar K."/>
            <person name="Dunn P."/>
            <person name="Etgu P."/>
            <person name="Feldblyum T.V."/>
            <person name="Feng J.-D."/>
            <person name="Fong B."/>
            <person name="Fujii C.Y."/>
            <person name="Gill J.E."/>
            <person name="Goldsmith A.D."/>
            <person name="Haas B."/>
            <person name="Hansen N.F."/>
            <person name="Hughes B."/>
            <person name="Huizar L."/>
            <person name="Hunter J.L."/>
            <person name="Jenkins J."/>
            <person name="Johnson-Hopson C."/>
            <person name="Khan S."/>
            <person name="Khaykin E."/>
            <person name="Kim C.J."/>
            <person name="Koo H.L."/>
            <person name="Kremenetskaia I."/>
            <person name="Kurtz D.B."/>
            <person name="Kwan A."/>
            <person name="Lam B."/>
            <person name="Langin-Hooper S."/>
            <person name="Lee A."/>
            <person name="Lee J.M."/>
            <person name="Lenz C.A."/>
            <person name="Li J.H."/>
            <person name="Li Y.-P."/>
            <person name="Lin X."/>
            <person name="Liu S.X."/>
            <person name="Liu Z.A."/>
            <person name="Luros J.S."/>
            <person name="Maiti R."/>
            <person name="Marziali A."/>
            <person name="Militscher J."/>
            <person name="Miranda M."/>
            <person name="Nguyen M."/>
            <person name="Nierman W.C."/>
            <person name="Osborne B.I."/>
            <person name="Pai G."/>
            <person name="Peterson J."/>
            <person name="Pham P.K."/>
            <person name="Rizzo M."/>
            <person name="Rooney T."/>
            <person name="Rowley D."/>
            <person name="Sakano H."/>
            <person name="Salzberg S.L."/>
            <person name="Schwartz J.R."/>
            <person name="Shinn P."/>
            <person name="Southwick A.M."/>
            <person name="Sun H."/>
            <person name="Tallon L.J."/>
            <person name="Tambunga G."/>
            <person name="Toriumi M.J."/>
            <person name="Town C.D."/>
            <person name="Utterback T."/>
            <person name="Van Aken S."/>
            <person name="Vaysberg M."/>
            <person name="Vysotskaia V.S."/>
            <person name="Walker M."/>
            <person name="Wu D."/>
            <person name="Yu G."/>
            <person name="Fraser C.M."/>
            <person name="Venter J.C."/>
            <person name="Davis R.W."/>
        </authorList>
    </citation>
    <scope>NUCLEOTIDE SEQUENCE [LARGE SCALE GENOMIC DNA]</scope>
    <source>
        <strain>cv. Columbia</strain>
    </source>
</reference>
<reference key="2">
    <citation type="journal article" date="2017" name="Plant J.">
        <title>Araport11: a complete reannotation of the Arabidopsis thaliana reference genome.</title>
        <authorList>
            <person name="Cheng C.Y."/>
            <person name="Krishnakumar V."/>
            <person name="Chan A.P."/>
            <person name="Thibaud-Nissen F."/>
            <person name="Schobel S."/>
            <person name="Town C.D."/>
        </authorList>
    </citation>
    <scope>GENOME REANNOTATION</scope>
    <source>
        <strain>cv. Columbia</strain>
    </source>
</reference>
<reference key="3">
    <citation type="journal article" date="2003" name="Science">
        <title>Empirical analysis of transcriptional activity in the Arabidopsis genome.</title>
        <authorList>
            <person name="Yamada K."/>
            <person name="Lim J."/>
            <person name="Dale J.M."/>
            <person name="Chen H."/>
            <person name="Shinn P."/>
            <person name="Palm C.J."/>
            <person name="Southwick A.M."/>
            <person name="Wu H.C."/>
            <person name="Kim C.J."/>
            <person name="Nguyen M."/>
            <person name="Pham P.K."/>
            <person name="Cheuk R.F."/>
            <person name="Karlin-Newmann G."/>
            <person name="Liu S.X."/>
            <person name="Lam B."/>
            <person name="Sakano H."/>
            <person name="Wu T."/>
            <person name="Yu G."/>
            <person name="Miranda M."/>
            <person name="Quach H.L."/>
            <person name="Tripp M."/>
            <person name="Chang C.H."/>
            <person name="Lee J.M."/>
            <person name="Toriumi M.J."/>
            <person name="Chan M.M."/>
            <person name="Tang C.C."/>
            <person name="Onodera C.S."/>
            <person name="Deng J.M."/>
            <person name="Akiyama K."/>
            <person name="Ansari Y."/>
            <person name="Arakawa T."/>
            <person name="Banh J."/>
            <person name="Banno F."/>
            <person name="Bowser L."/>
            <person name="Brooks S.Y."/>
            <person name="Carninci P."/>
            <person name="Chao Q."/>
            <person name="Choy N."/>
            <person name="Enju A."/>
            <person name="Goldsmith A.D."/>
            <person name="Gurjal M."/>
            <person name="Hansen N.F."/>
            <person name="Hayashizaki Y."/>
            <person name="Johnson-Hopson C."/>
            <person name="Hsuan V.W."/>
            <person name="Iida K."/>
            <person name="Karnes M."/>
            <person name="Khan S."/>
            <person name="Koesema E."/>
            <person name="Ishida J."/>
            <person name="Jiang P.X."/>
            <person name="Jones T."/>
            <person name="Kawai J."/>
            <person name="Kamiya A."/>
            <person name="Meyers C."/>
            <person name="Nakajima M."/>
            <person name="Narusaka M."/>
            <person name="Seki M."/>
            <person name="Sakurai T."/>
            <person name="Satou M."/>
            <person name="Tamse R."/>
            <person name="Vaysberg M."/>
            <person name="Wallender E.K."/>
            <person name="Wong C."/>
            <person name="Yamamura Y."/>
            <person name="Yuan S."/>
            <person name="Shinozaki K."/>
            <person name="Davis R.W."/>
            <person name="Theologis A."/>
            <person name="Ecker J.R."/>
        </authorList>
    </citation>
    <scope>NUCLEOTIDE SEQUENCE [LARGE SCALE MRNA]</scope>
    <source>
        <strain>cv. Columbia</strain>
    </source>
</reference>
<reference key="4">
    <citation type="submission" date="2005-03" db="EMBL/GenBank/DDBJ databases">
        <title>Large-scale analysis of RIKEN Arabidopsis full-length (RAFL) cDNAs.</title>
        <authorList>
            <person name="Totoki Y."/>
            <person name="Seki M."/>
            <person name="Ishida J."/>
            <person name="Nakajima M."/>
            <person name="Enju A."/>
            <person name="Kamiya A."/>
            <person name="Narusaka M."/>
            <person name="Shin-i T."/>
            <person name="Nakagawa M."/>
            <person name="Sakamoto N."/>
            <person name="Oishi K."/>
            <person name="Kohara Y."/>
            <person name="Kobayashi M."/>
            <person name="Toyoda A."/>
            <person name="Sakaki Y."/>
            <person name="Sakurai T."/>
            <person name="Iida K."/>
            <person name="Akiyama K."/>
            <person name="Satou M."/>
            <person name="Toyoda T."/>
            <person name="Konagaya A."/>
            <person name="Carninci P."/>
            <person name="Kawai J."/>
            <person name="Hayashizaki Y."/>
            <person name="Shinozaki K."/>
        </authorList>
    </citation>
    <scope>NUCLEOTIDE SEQUENCE [LARGE SCALE MRNA]</scope>
    <source>
        <strain>cv. Columbia</strain>
    </source>
</reference>
<reference key="5">
    <citation type="submission" date="2002-03" db="EMBL/GenBank/DDBJ databases">
        <title>Full-length cDNA from Arabidopsis thaliana.</title>
        <authorList>
            <person name="Brover V.V."/>
            <person name="Troukhan M.E."/>
            <person name="Alexandrov N.A."/>
            <person name="Lu Y.-P."/>
            <person name="Flavell R.B."/>
            <person name="Feldmann K.A."/>
        </authorList>
    </citation>
    <scope>NUCLEOTIDE SEQUENCE [LARGE SCALE MRNA]</scope>
</reference>
<reference key="6">
    <citation type="journal article" date="2010" name="Plant Physiol. Biochem.">
        <title>Comparative analysis of Arabidopsis zinc finger-containing glycine-rich RNA-binding proteins during cold adaptation.</title>
        <authorList>
            <person name="Kim W.Y."/>
            <person name="Kim J.Y."/>
            <person name="Jung H.J."/>
            <person name="Oh S.H."/>
            <person name="Han Y.S."/>
            <person name="Kang H."/>
        </authorList>
    </citation>
    <scope>FUNCTION</scope>
    <scope>SUBCELLULAR LOCATION</scope>
    <scope>TISSUE SPECIFICITY</scope>
    <scope>INDUCTION BY COLD</scope>
    <scope>DISRUPTION PHENOTYPE</scope>
</reference>
<dbReference type="EMBL" id="AC002292">
    <property type="protein sequence ID" value="AAB71977.1"/>
    <property type="molecule type" value="Genomic_DNA"/>
</dbReference>
<dbReference type="EMBL" id="CP002684">
    <property type="protein sequence ID" value="AEE33714.1"/>
    <property type="molecule type" value="Genomic_DNA"/>
</dbReference>
<dbReference type="EMBL" id="CP002684">
    <property type="protein sequence ID" value="AEE33715.1"/>
    <property type="molecule type" value="Genomic_DNA"/>
</dbReference>
<dbReference type="EMBL" id="BT002328">
    <property type="protein sequence ID" value="AAN86161.1"/>
    <property type="molecule type" value="mRNA"/>
</dbReference>
<dbReference type="EMBL" id="AK221863">
    <property type="protein sequence ID" value="BAD94150.1"/>
    <property type="molecule type" value="mRNA"/>
</dbReference>
<dbReference type="EMBL" id="AY088195">
    <property type="protein sequence ID" value="AAM65738.1"/>
    <property type="molecule type" value="mRNA"/>
</dbReference>
<dbReference type="PIR" id="G96631">
    <property type="entry name" value="G96631"/>
</dbReference>
<dbReference type="RefSeq" id="NP_564759.1">
    <property type="nucleotide sequence ID" value="NM_104748.3"/>
</dbReference>
<dbReference type="RefSeq" id="NP_849832.1">
    <property type="nucleotide sequence ID" value="NM_179501.1"/>
</dbReference>
<dbReference type="SMR" id="O22703"/>
<dbReference type="BioGRID" id="27583">
    <property type="interactions" value="10"/>
</dbReference>
<dbReference type="FunCoup" id="O22703">
    <property type="interactions" value="113"/>
</dbReference>
<dbReference type="IntAct" id="O22703">
    <property type="interactions" value="7"/>
</dbReference>
<dbReference type="STRING" id="3702.O22703"/>
<dbReference type="iPTMnet" id="O22703"/>
<dbReference type="PaxDb" id="3702-AT1G60650.2"/>
<dbReference type="ProteomicsDB" id="226694"/>
<dbReference type="EnsemblPlants" id="AT1G60650.1">
    <property type="protein sequence ID" value="AT1G60650.1"/>
    <property type="gene ID" value="AT1G60650"/>
</dbReference>
<dbReference type="EnsemblPlants" id="AT1G60650.2">
    <property type="protein sequence ID" value="AT1G60650.2"/>
    <property type="gene ID" value="AT1G60650"/>
</dbReference>
<dbReference type="GeneID" id="842359"/>
<dbReference type="Gramene" id="AT1G60650.1">
    <property type="protein sequence ID" value="AT1G60650.1"/>
    <property type="gene ID" value="AT1G60650"/>
</dbReference>
<dbReference type="Gramene" id="AT1G60650.2">
    <property type="protein sequence ID" value="AT1G60650.2"/>
    <property type="gene ID" value="AT1G60650"/>
</dbReference>
<dbReference type="KEGG" id="ath:AT1G60650"/>
<dbReference type="Araport" id="AT1G60650"/>
<dbReference type="TAIR" id="AT1G60650">
    <property type="gene designation" value="RBGB1"/>
</dbReference>
<dbReference type="eggNOG" id="KOG0118">
    <property type="taxonomic scope" value="Eukaryota"/>
</dbReference>
<dbReference type="HOGENOM" id="CLU_012062_28_0_1"/>
<dbReference type="InParanoid" id="O22703"/>
<dbReference type="OMA" id="MADPEEC"/>
<dbReference type="OrthoDB" id="439808at2759"/>
<dbReference type="PhylomeDB" id="O22703"/>
<dbReference type="CD-CODE" id="9A8A194B">
    <property type="entry name" value="Nuclear speckle"/>
</dbReference>
<dbReference type="PRO" id="PR:O22703"/>
<dbReference type="Proteomes" id="UP000006548">
    <property type="component" value="Chromosome 1"/>
</dbReference>
<dbReference type="ExpressionAtlas" id="O22703">
    <property type="expression patterns" value="baseline and differential"/>
</dbReference>
<dbReference type="GO" id="GO:0016607">
    <property type="term" value="C:nuclear speck"/>
    <property type="evidence" value="ECO:0000314"/>
    <property type="project" value="TAIR"/>
</dbReference>
<dbReference type="GO" id="GO:0005634">
    <property type="term" value="C:nucleus"/>
    <property type="evidence" value="ECO:0000314"/>
    <property type="project" value="TAIR"/>
</dbReference>
<dbReference type="GO" id="GO:0003677">
    <property type="term" value="F:DNA binding"/>
    <property type="evidence" value="ECO:0007669"/>
    <property type="project" value="UniProtKB-KW"/>
</dbReference>
<dbReference type="GO" id="GO:0003729">
    <property type="term" value="F:mRNA binding"/>
    <property type="evidence" value="ECO:0000314"/>
    <property type="project" value="TAIR"/>
</dbReference>
<dbReference type="GO" id="GO:0003676">
    <property type="term" value="F:nucleic acid binding"/>
    <property type="evidence" value="ECO:0000314"/>
    <property type="project" value="TAIR"/>
</dbReference>
<dbReference type="GO" id="GO:0008270">
    <property type="term" value="F:zinc ion binding"/>
    <property type="evidence" value="ECO:0007669"/>
    <property type="project" value="UniProtKB-KW"/>
</dbReference>
<dbReference type="GO" id="GO:0045892">
    <property type="term" value="P:negative regulation of DNA-templated transcription"/>
    <property type="evidence" value="ECO:0000316"/>
    <property type="project" value="TAIR"/>
</dbReference>
<dbReference type="GO" id="GO:0048026">
    <property type="term" value="P:positive regulation of mRNA splicing, via spliceosome"/>
    <property type="evidence" value="ECO:0000316"/>
    <property type="project" value="TAIR"/>
</dbReference>
<dbReference type="GO" id="GO:0009409">
    <property type="term" value="P:response to cold"/>
    <property type="evidence" value="ECO:0000270"/>
    <property type="project" value="TAIR"/>
</dbReference>
<dbReference type="GO" id="GO:0009414">
    <property type="term" value="P:response to water deprivation"/>
    <property type="evidence" value="ECO:0000270"/>
    <property type="project" value="TAIR"/>
</dbReference>
<dbReference type="Gene3D" id="3.30.70.330">
    <property type="match status" value="1"/>
</dbReference>
<dbReference type="Gene3D" id="4.10.60.10">
    <property type="entry name" value="Zinc finger, CCHC-type"/>
    <property type="match status" value="1"/>
</dbReference>
<dbReference type="InterPro" id="IPR012677">
    <property type="entry name" value="Nucleotide-bd_a/b_plait_sf"/>
</dbReference>
<dbReference type="InterPro" id="IPR035979">
    <property type="entry name" value="RBD_domain_sf"/>
</dbReference>
<dbReference type="InterPro" id="IPR000504">
    <property type="entry name" value="RRM_dom"/>
</dbReference>
<dbReference type="InterPro" id="IPR001878">
    <property type="entry name" value="Znf_CCHC"/>
</dbReference>
<dbReference type="InterPro" id="IPR036875">
    <property type="entry name" value="Znf_CCHC_sf"/>
</dbReference>
<dbReference type="PANTHER" id="PTHR48031:SF2">
    <property type="entry name" value="RNA-BINDING PROTEIN 4"/>
    <property type="match status" value="1"/>
</dbReference>
<dbReference type="PANTHER" id="PTHR48031">
    <property type="entry name" value="SRA STEM-LOOP-INTERACTING RNA-BINDING PROTEIN, MITOCHONDRIAL"/>
    <property type="match status" value="1"/>
</dbReference>
<dbReference type="Pfam" id="PF00076">
    <property type="entry name" value="RRM_1"/>
    <property type="match status" value="1"/>
</dbReference>
<dbReference type="Pfam" id="PF00098">
    <property type="entry name" value="zf-CCHC"/>
    <property type="match status" value="1"/>
</dbReference>
<dbReference type="SMART" id="SM00360">
    <property type="entry name" value="RRM"/>
    <property type="match status" value="1"/>
</dbReference>
<dbReference type="SMART" id="SM00343">
    <property type="entry name" value="ZnF_C2HC"/>
    <property type="match status" value="1"/>
</dbReference>
<dbReference type="SUPFAM" id="SSF57756">
    <property type="entry name" value="Retrovirus zinc finger-like domains"/>
    <property type="match status" value="1"/>
</dbReference>
<dbReference type="SUPFAM" id="SSF54928">
    <property type="entry name" value="RNA-binding domain, RBD"/>
    <property type="match status" value="1"/>
</dbReference>
<dbReference type="PROSITE" id="PS50102">
    <property type="entry name" value="RRM"/>
    <property type="match status" value="1"/>
</dbReference>
<dbReference type="PROSITE" id="PS50158">
    <property type="entry name" value="ZF_CCHC"/>
    <property type="match status" value="1"/>
</dbReference>
<organism>
    <name type="scientific">Arabidopsis thaliana</name>
    <name type="common">Mouse-ear cress</name>
    <dbReference type="NCBI Taxonomy" id="3702"/>
    <lineage>
        <taxon>Eukaryota</taxon>
        <taxon>Viridiplantae</taxon>
        <taxon>Streptophyta</taxon>
        <taxon>Embryophyta</taxon>
        <taxon>Tracheophyta</taxon>
        <taxon>Spermatophyta</taxon>
        <taxon>Magnoliopsida</taxon>
        <taxon>eudicotyledons</taxon>
        <taxon>Gunneridae</taxon>
        <taxon>Pentapetalae</taxon>
        <taxon>rosids</taxon>
        <taxon>malvids</taxon>
        <taxon>Brassicales</taxon>
        <taxon>Brassicaceae</taxon>
        <taxon>Camelineae</taxon>
        <taxon>Arabidopsis</taxon>
    </lineage>
</organism>
<protein>
    <recommendedName>
        <fullName evidence="7">Glycine-rich RNA-binding protein RZ1B</fullName>
        <shortName evidence="6">AtRZ-1a</shortName>
    </recommendedName>
</protein>
<feature type="chain" id="PRO_0000431281" description="Glycine-rich RNA-binding protein RZ1B">
    <location>
        <begin position="1"/>
        <end position="292"/>
    </location>
</feature>
<feature type="domain" description="RRM" evidence="3">
    <location>
        <begin position="12"/>
        <end position="90"/>
    </location>
</feature>
<feature type="zinc finger region" description="CCHC-type" evidence="2">
    <location>
        <begin position="117"/>
        <end position="132"/>
    </location>
</feature>
<feature type="region of interest" description="Disordered" evidence="4">
    <location>
        <begin position="93"/>
        <end position="114"/>
    </location>
</feature>
<feature type="region of interest" description="Disordered" evidence="4">
    <location>
        <begin position="180"/>
        <end position="292"/>
    </location>
</feature>
<feature type="compositionally biased region" description="Basic and acidic residues" evidence="4">
    <location>
        <begin position="180"/>
        <end position="210"/>
    </location>
</feature>
<feature type="compositionally biased region" description="Basic and acidic residues" evidence="4">
    <location>
        <begin position="220"/>
        <end position="268"/>
    </location>
</feature>
<feature type="modified residue" description="Phosphoserine" evidence="1">
    <location>
        <position position="20"/>
    </location>
</feature>
<accession>O22703</accession>
<gene>
    <name evidence="7" type="primary">RZ1B</name>
    <name evidence="8" type="ordered locus">At1g60650</name>
    <name evidence="9" type="ORF">F8A5.17</name>
</gene>
<sequence>MKDRENDGNLESRIFVGGLSWDVTERQLESTFDRYGKITECQIMVGRDTGRPRGFGFITFTDRRGADDAIKHMHGRELGNKVISVNKAEPKVGGEDVDQLKKGGGYSSRGKGTEDECFKCRRPGHWARDCPSTGDDRERFRVPLAMRSRIGDIDGHRDRYGDRDLEREREREREFDRYMDGRRDRDGGRYSYRDRFDSGDKYEPRDHYPFERYAPPGDRFVSDRYGMPEHHLENEYRGRERSYDRDRYARDTSDRYGDMGPIRDEGRPYRSRPGPYDRPSRPGGRPSSYERW</sequence>
<proteinExistence type="evidence at transcript level"/>
<comment type="function">
    <text evidence="5">Binds RNA and DNA sequences non-specifically. May be involved in tolerance to cold stress.</text>
</comment>
<comment type="subcellular location">
    <subcellularLocation>
        <location evidence="5">Nucleus</location>
    </subcellularLocation>
</comment>
<comment type="tissue specificity">
    <text evidence="5">Expressed in roots, rosette and cauline leaves, stems, floral buds and flowers.</text>
</comment>
<comment type="induction">
    <text evidence="5">By cold stress. Down-regulated by dehydration.</text>
</comment>
<comment type="disruption phenotype">
    <text evidence="5">No visible phenotype under normal growth conditions.</text>
</comment>